<accession>Q8KDE2</accession>
<protein>
    <recommendedName>
        <fullName evidence="2">Ornithine carbamoyltransferase</fullName>
        <shortName evidence="2">OTCase</shortName>
        <ecNumber evidence="2">2.1.3.3</ecNumber>
    </recommendedName>
</protein>
<evidence type="ECO:0000250" key="1"/>
<evidence type="ECO:0000255" key="2">
    <source>
        <dbReference type="HAMAP-Rule" id="MF_01109"/>
    </source>
</evidence>
<evidence type="ECO:0000305" key="3"/>
<keyword id="KW-0028">Amino-acid biosynthesis</keyword>
<keyword id="KW-0055">Arginine biosynthesis</keyword>
<keyword id="KW-0963">Cytoplasm</keyword>
<keyword id="KW-1185">Reference proteome</keyword>
<keyword id="KW-0808">Transferase</keyword>
<organism>
    <name type="scientific">Chlorobaculum tepidum (strain ATCC 49652 / DSM 12025 / NBRC 103806 / TLS)</name>
    <name type="common">Chlorobium tepidum</name>
    <dbReference type="NCBI Taxonomy" id="194439"/>
    <lineage>
        <taxon>Bacteria</taxon>
        <taxon>Pseudomonadati</taxon>
        <taxon>Chlorobiota</taxon>
        <taxon>Chlorobiia</taxon>
        <taxon>Chlorobiales</taxon>
        <taxon>Chlorobiaceae</taxon>
        <taxon>Chlorobaculum</taxon>
    </lineage>
</organism>
<dbReference type="EC" id="2.1.3.3" evidence="2"/>
<dbReference type="EMBL" id="AE006470">
    <property type="protein sequence ID" value="AAM72345.1"/>
    <property type="molecule type" value="Genomic_DNA"/>
</dbReference>
<dbReference type="RefSeq" id="NP_662003.1">
    <property type="nucleotide sequence ID" value="NC_002932.3"/>
</dbReference>
<dbReference type="RefSeq" id="WP_010932790.1">
    <property type="nucleotide sequence ID" value="NC_002932.3"/>
</dbReference>
<dbReference type="SMR" id="Q8KDE2"/>
<dbReference type="STRING" id="194439.CT1112"/>
<dbReference type="EnsemblBacteria" id="AAM72345">
    <property type="protein sequence ID" value="AAM72345"/>
    <property type="gene ID" value="CT1112"/>
</dbReference>
<dbReference type="KEGG" id="cte:CT1112"/>
<dbReference type="PATRIC" id="fig|194439.7.peg.1010"/>
<dbReference type="eggNOG" id="COG0078">
    <property type="taxonomic scope" value="Bacteria"/>
</dbReference>
<dbReference type="HOGENOM" id="CLU_043846_3_2_10"/>
<dbReference type="OrthoDB" id="9802587at2"/>
<dbReference type="UniPathway" id="UPA00068">
    <property type="reaction ID" value="UER00112"/>
</dbReference>
<dbReference type="Proteomes" id="UP000001007">
    <property type="component" value="Chromosome"/>
</dbReference>
<dbReference type="GO" id="GO:0005737">
    <property type="term" value="C:cytoplasm"/>
    <property type="evidence" value="ECO:0007669"/>
    <property type="project" value="UniProtKB-SubCell"/>
</dbReference>
<dbReference type="GO" id="GO:0016597">
    <property type="term" value="F:amino acid binding"/>
    <property type="evidence" value="ECO:0007669"/>
    <property type="project" value="InterPro"/>
</dbReference>
<dbReference type="GO" id="GO:0004585">
    <property type="term" value="F:ornithine carbamoyltransferase activity"/>
    <property type="evidence" value="ECO:0007669"/>
    <property type="project" value="UniProtKB-UniRule"/>
</dbReference>
<dbReference type="GO" id="GO:0042450">
    <property type="term" value="P:arginine biosynthetic process via ornithine"/>
    <property type="evidence" value="ECO:0007669"/>
    <property type="project" value="TreeGrafter"/>
</dbReference>
<dbReference type="GO" id="GO:0019240">
    <property type="term" value="P:citrulline biosynthetic process"/>
    <property type="evidence" value="ECO:0007669"/>
    <property type="project" value="TreeGrafter"/>
</dbReference>
<dbReference type="GO" id="GO:0006526">
    <property type="term" value="P:L-arginine biosynthetic process"/>
    <property type="evidence" value="ECO:0007669"/>
    <property type="project" value="UniProtKB-UniRule"/>
</dbReference>
<dbReference type="FunFam" id="3.40.50.1370:FF:000008">
    <property type="entry name" value="Ornithine carbamoyltransferase"/>
    <property type="match status" value="1"/>
</dbReference>
<dbReference type="Gene3D" id="3.40.50.1370">
    <property type="entry name" value="Aspartate/ornithine carbamoyltransferase"/>
    <property type="match status" value="2"/>
</dbReference>
<dbReference type="HAMAP" id="MF_01109">
    <property type="entry name" value="OTCase"/>
    <property type="match status" value="1"/>
</dbReference>
<dbReference type="InterPro" id="IPR006132">
    <property type="entry name" value="Asp/Orn_carbamoyltranf_P-bd"/>
</dbReference>
<dbReference type="InterPro" id="IPR006130">
    <property type="entry name" value="Asp/Orn_carbamoylTrfase"/>
</dbReference>
<dbReference type="InterPro" id="IPR036901">
    <property type="entry name" value="Asp/Orn_carbamoylTrfase_sf"/>
</dbReference>
<dbReference type="InterPro" id="IPR006131">
    <property type="entry name" value="Asp_carbamoyltransf_Asp/Orn-bd"/>
</dbReference>
<dbReference type="InterPro" id="IPR002292">
    <property type="entry name" value="Orn/put_carbamltrans"/>
</dbReference>
<dbReference type="InterPro" id="IPR024904">
    <property type="entry name" value="OTCase_ArgI"/>
</dbReference>
<dbReference type="NCBIfam" id="TIGR00658">
    <property type="entry name" value="orni_carb_tr"/>
    <property type="match status" value="1"/>
</dbReference>
<dbReference type="NCBIfam" id="NF001986">
    <property type="entry name" value="PRK00779.1"/>
    <property type="match status" value="1"/>
</dbReference>
<dbReference type="PANTHER" id="PTHR45753">
    <property type="entry name" value="ORNITHINE CARBAMOYLTRANSFERASE, MITOCHONDRIAL"/>
    <property type="match status" value="1"/>
</dbReference>
<dbReference type="PANTHER" id="PTHR45753:SF3">
    <property type="entry name" value="ORNITHINE TRANSCARBAMYLASE, MITOCHONDRIAL"/>
    <property type="match status" value="1"/>
</dbReference>
<dbReference type="Pfam" id="PF00185">
    <property type="entry name" value="OTCace"/>
    <property type="match status" value="1"/>
</dbReference>
<dbReference type="Pfam" id="PF02729">
    <property type="entry name" value="OTCace_N"/>
    <property type="match status" value="1"/>
</dbReference>
<dbReference type="PRINTS" id="PR00100">
    <property type="entry name" value="AOTCASE"/>
</dbReference>
<dbReference type="PRINTS" id="PR00102">
    <property type="entry name" value="OTCASE"/>
</dbReference>
<dbReference type="SUPFAM" id="SSF53671">
    <property type="entry name" value="Aspartate/ornithine carbamoyltransferase"/>
    <property type="match status" value="1"/>
</dbReference>
<reference key="1">
    <citation type="journal article" date="2002" name="Proc. Natl. Acad. Sci. U.S.A.">
        <title>The complete genome sequence of Chlorobium tepidum TLS, a photosynthetic, anaerobic, green-sulfur bacterium.</title>
        <authorList>
            <person name="Eisen J.A."/>
            <person name="Nelson K.E."/>
            <person name="Paulsen I.T."/>
            <person name="Heidelberg J.F."/>
            <person name="Wu M."/>
            <person name="Dodson R.J."/>
            <person name="DeBoy R.T."/>
            <person name="Gwinn M.L."/>
            <person name="Nelson W.C."/>
            <person name="Haft D.H."/>
            <person name="Hickey E.K."/>
            <person name="Peterson J.D."/>
            <person name="Durkin A.S."/>
            <person name="Kolonay J.F."/>
            <person name="Yang F."/>
            <person name="Holt I.E."/>
            <person name="Umayam L.A."/>
            <person name="Mason T.M."/>
            <person name="Brenner M."/>
            <person name="Shea T.P."/>
            <person name="Parksey D.S."/>
            <person name="Nierman W.C."/>
            <person name="Feldblyum T.V."/>
            <person name="Hansen C.L."/>
            <person name="Craven M.B."/>
            <person name="Radune D."/>
            <person name="Vamathevan J.J."/>
            <person name="Khouri H.M."/>
            <person name="White O."/>
            <person name="Gruber T.M."/>
            <person name="Ketchum K.A."/>
            <person name="Venter J.C."/>
            <person name="Tettelin H."/>
            <person name="Bryant D.A."/>
            <person name="Fraser C.M."/>
        </authorList>
    </citation>
    <scope>NUCLEOTIDE SEQUENCE [LARGE SCALE GENOMIC DNA]</scope>
    <source>
        <strain>ATCC 49652 / DSM 12025 / NBRC 103806 / TLS</strain>
    </source>
</reference>
<sequence>MSQDNKGNGSKKRDFLGFTGLDAAKIIELFDYSLFIKQQRETNRNSDEFRPIRHKTVAMIFNKPSLRTRVSFELGVYELGGHAISLEGKSIGVGERESIEDIARLLSRYNDAIVARLHEHEIIETLAKHADIPVINALTDLSHPCQVLADAFTLYEKGLWRDDIKVVFVGDGNNVANSWIELAGILPFHFVLACPEGYLPDETLLKQARSNAKGTIEILHDPMEAAKQADVLYTDVWTSMGQEEEMAERLKAFAPFQINAKMVAEAKPSAVIMHCMPAHRGQEISAEVMDGPQSIIIDEAENRLHVQKALMVKLMNHDVYRKFHLTHRLHRAANRLKA</sequence>
<gene>
    <name evidence="2" type="primary">argF</name>
    <name type="ordered locus">CT1112</name>
</gene>
<name>OTC_CHLTE</name>
<proteinExistence type="inferred from homology"/>
<feature type="chain" id="PRO_0000112907" description="Ornithine carbamoyltransferase">
    <location>
        <begin position="1"/>
        <end position="338"/>
    </location>
</feature>
<feature type="binding site" evidence="2">
    <location>
        <position position="116"/>
    </location>
    <ligand>
        <name>carbamoyl phosphate</name>
        <dbReference type="ChEBI" id="CHEBI:58228"/>
    </ligand>
</feature>
<feature type="binding site" evidence="2">
    <location>
        <begin position="143"/>
        <end position="146"/>
    </location>
    <ligand>
        <name>carbamoyl phosphate</name>
        <dbReference type="ChEBI" id="CHEBI:58228"/>
    </ligand>
</feature>
<feature type="binding site" evidence="2">
    <location>
        <position position="174"/>
    </location>
    <ligand>
        <name>L-ornithine</name>
        <dbReference type="ChEBI" id="CHEBI:46911"/>
    </ligand>
</feature>
<feature type="binding site" evidence="2">
    <location>
        <position position="235"/>
    </location>
    <ligand>
        <name>L-ornithine</name>
        <dbReference type="ChEBI" id="CHEBI:46911"/>
    </ligand>
</feature>
<feature type="binding site" evidence="2">
    <location>
        <begin position="239"/>
        <end position="240"/>
    </location>
    <ligand>
        <name>L-ornithine</name>
        <dbReference type="ChEBI" id="CHEBI:46911"/>
    </ligand>
</feature>
<feature type="binding site" evidence="3">
    <location>
        <position position="275"/>
    </location>
    <ligand>
        <name>carbamoyl phosphate</name>
        <dbReference type="ChEBI" id="CHEBI:58228"/>
    </ligand>
</feature>
<feature type="binding site" evidence="2">
    <location>
        <position position="303"/>
    </location>
    <ligand>
        <name>carbamoyl phosphate</name>
        <dbReference type="ChEBI" id="CHEBI:58228"/>
    </ligand>
</feature>
<comment type="function">
    <text evidence="1">Reversibly catalyzes the transfer of the carbamoyl group from carbamoyl phosphate (CP) to the N(epsilon) atom of ornithine (ORN) to produce L-citrulline.</text>
</comment>
<comment type="catalytic activity">
    <reaction evidence="2">
        <text>carbamoyl phosphate + L-ornithine = L-citrulline + phosphate + H(+)</text>
        <dbReference type="Rhea" id="RHEA:19513"/>
        <dbReference type="ChEBI" id="CHEBI:15378"/>
        <dbReference type="ChEBI" id="CHEBI:43474"/>
        <dbReference type="ChEBI" id="CHEBI:46911"/>
        <dbReference type="ChEBI" id="CHEBI:57743"/>
        <dbReference type="ChEBI" id="CHEBI:58228"/>
        <dbReference type="EC" id="2.1.3.3"/>
    </reaction>
</comment>
<comment type="pathway">
    <text evidence="2">Amino-acid biosynthesis; L-arginine biosynthesis; L-arginine from L-ornithine and carbamoyl phosphate: step 1/3.</text>
</comment>
<comment type="subcellular location">
    <subcellularLocation>
        <location evidence="2">Cytoplasm</location>
    </subcellularLocation>
</comment>
<comment type="similarity">
    <text evidence="2">Belongs to the aspartate/ornithine carbamoyltransferase superfamily. OTCase family.</text>
</comment>
<comment type="caution">
    <text evidence="3">Lacks the conserved threonine and leucine residues in positions 66 and 276, respectively, which are part of the carbamoylphosphate and ornithine binding sites; they are replaced by a leucine and a methionine residue, respectively.</text>
</comment>